<organism>
    <name type="scientific">Acinetobacter baumannii (strain ATCC 17978 / DSM 105126 / CIP 53.77 / LMG 1025 / NCDC KC755 / 5377)</name>
    <dbReference type="NCBI Taxonomy" id="400667"/>
    <lineage>
        <taxon>Bacteria</taxon>
        <taxon>Pseudomonadati</taxon>
        <taxon>Pseudomonadota</taxon>
        <taxon>Gammaproteobacteria</taxon>
        <taxon>Moraxellales</taxon>
        <taxon>Moraxellaceae</taxon>
        <taxon>Acinetobacter</taxon>
        <taxon>Acinetobacter calcoaceticus/baumannii complex</taxon>
    </lineage>
</organism>
<feature type="chain" id="PRO_1000129149" description="Succinate--CoA ligase [ADP-forming] subunit beta">
    <location>
        <begin position="1"/>
        <end position="388"/>
    </location>
</feature>
<feature type="domain" description="ATP-grasp" evidence="1">
    <location>
        <begin position="9"/>
        <end position="245"/>
    </location>
</feature>
<feature type="binding site" evidence="1">
    <location>
        <position position="46"/>
    </location>
    <ligand>
        <name>ATP</name>
        <dbReference type="ChEBI" id="CHEBI:30616"/>
    </ligand>
</feature>
<feature type="binding site" evidence="1">
    <location>
        <begin position="53"/>
        <end position="55"/>
    </location>
    <ligand>
        <name>ATP</name>
        <dbReference type="ChEBI" id="CHEBI:30616"/>
    </ligand>
</feature>
<feature type="binding site" evidence="1">
    <location>
        <position position="100"/>
    </location>
    <ligand>
        <name>ATP</name>
        <dbReference type="ChEBI" id="CHEBI:30616"/>
    </ligand>
</feature>
<feature type="binding site" evidence="1">
    <location>
        <position position="103"/>
    </location>
    <ligand>
        <name>ATP</name>
        <dbReference type="ChEBI" id="CHEBI:30616"/>
    </ligand>
</feature>
<feature type="binding site" evidence="1">
    <location>
        <position position="108"/>
    </location>
    <ligand>
        <name>ATP</name>
        <dbReference type="ChEBI" id="CHEBI:30616"/>
    </ligand>
</feature>
<feature type="binding site" evidence="1">
    <location>
        <position position="200"/>
    </location>
    <ligand>
        <name>Mg(2+)</name>
        <dbReference type="ChEBI" id="CHEBI:18420"/>
    </ligand>
</feature>
<feature type="binding site" evidence="1">
    <location>
        <position position="214"/>
    </location>
    <ligand>
        <name>Mg(2+)</name>
        <dbReference type="ChEBI" id="CHEBI:18420"/>
    </ligand>
</feature>
<feature type="binding site" evidence="1">
    <location>
        <position position="265"/>
    </location>
    <ligand>
        <name>substrate</name>
        <note>ligand shared with subunit alpha</note>
    </ligand>
</feature>
<feature type="binding site" evidence="1">
    <location>
        <begin position="322"/>
        <end position="324"/>
    </location>
    <ligand>
        <name>substrate</name>
        <note>ligand shared with subunit alpha</note>
    </ligand>
</feature>
<evidence type="ECO:0000255" key="1">
    <source>
        <dbReference type="HAMAP-Rule" id="MF_00558"/>
    </source>
</evidence>
<proteinExistence type="inferred from homology"/>
<protein>
    <recommendedName>
        <fullName evidence="1">Succinate--CoA ligase [ADP-forming] subunit beta</fullName>
        <ecNumber evidence="1">6.2.1.5</ecNumber>
    </recommendedName>
    <alternativeName>
        <fullName evidence="1">Succinyl-CoA synthetase subunit beta</fullName>
        <shortName evidence="1">SCS-beta</shortName>
    </alternativeName>
</protein>
<sequence length="388" mass="41530">MNLHEYQAKALLKEYGMPVQEGILATNADEAVAAFEQLGGKFAVMKAQVHAGGRGKAGGVKVAKSKEDVIEFANNIIGTRLVTYQTDANGQPVNSIIVAEDVYPVERELYLGAVVDRSSRRITFMASTEGGVEIEKVAEETPEKIIKVEVDPLVGLQPFQAREVAFALGLKDKQIGQFVKIMTAAYQAFVENDFALFEINPLSVRENGEILCVDAKVGIDSNALYRLPKVAALRDKSQENERELKASEFDLNYVALEGNIGCMVNGAGLAMATMDIIKLYGGQPANFLDVGGGATKERVIEAFKIILADTSVQGVLINIFGGIVRCDMIAEAIIAAVQEVNVTVPVVVRLEGNNAELGAKLLDESGLKLISANGLSDAAEKVVAAVKA</sequence>
<gene>
    <name evidence="1" type="primary">sucC</name>
    <name type="ordered locus">A1S_2718</name>
</gene>
<name>SUCC_ACIBT</name>
<comment type="function">
    <text evidence="1">Succinyl-CoA synthetase functions in the citric acid cycle (TCA), coupling the hydrolysis of succinyl-CoA to the synthesis of either ATP or GTP and thus represents the only step of substrate-level phosphorylation in the TCA. The beta subunit provides nucleotide specificity of the enzyme and binds the substrate succinate, while the binding sites for coenzyme A and phosphate are found in the alpha subunit.</text>
</comment>
<comment type="catalytic activity">
    <reaction evidence="1">
        <text>succinate + ATP + CoA = succinyl-CoA + ADP + phosphate</text>
        <dbReference type="Rhea" id="RHEA:17661"/>
        <dbReference type="ChEBI" id="CHEBI:30031"/>
        <dbReference type="ChEBI" id="CHEBI:30616"/>
        <dbReference type="ChEBI" id="CHEBI:43474"/>
        <dbReference type="ChEBI" id="CHEBI:57287"/>
        <dbReference type="ChEBI" id="CHEBI:57292"/>
        <dbReference type="ChEBI" id="CHEBI:456216"/>
        <dbReference type="EC" id="6.2.1.5"/>
    </reaction>
    <physiologicalReaction direction="right-to-left" evidence="1">
        <dbReference type="Rhea" id="RHEA:17663"/>
    </physiologicalReaction>
</comment>
<comment type="catalytic activity">
    <reaction evidence="1">
        <text>GTP + succinate + CoA = succinyl-CoA + GDP + phosphate</text>
        <dbReference type="Rhea" id="RHEA:22120"/>
        <dbReference type="ChEBI" id="CHEBI:30031"/>
        <dbReference type="ChEBI" id="CHEBI:37565"/>
        <dbReference type="ChEBI" id="CHEBI:43474"/>
        <dbReference type="ChEBI" id="CHEBI:57287"/>
        <dbReference type="ChEBI" id="CHEBI:57292"/>
        <dbReference type="ChEBI" id="CHEBI:58189"/>
    </reaction>
    <physiologicalReaction direction="right-to-left" evidence="1">
        <dbReference type="Rhea" id="RHEA:22122"/>
    </physiologicalReaction>
</comment>
<comment type="cofactor">
    <cofactor evidence="1">
        <name>Mg(2+)</name>
        <dbReference type="ChEBI" id="CHEBI:18420"/>
    </cofactor>
    <text evidence="1">Binds 1 Mg(2+) ion per subunit.</text>
</comment>
<comment type="pathway">
    <text evidence="1">Carbohydrate metabolism; tricarboxylic acid cycle; succinate from succinyl-CoA (ligase route): step 1/1.</text>
</comment>
<comment type="subunit">
    <text evidence="1">Heterotetramer of two alpha and two beta subunits.</text>
</comment>
<comment type="similarity">
    <text evidence="1">Belongs to the succinate/malate CoA ligase beta subunit family.</text>
</comment>
<keyword id="KW-0067">ATP-binding</keyword>
<keyword id="KW-0436">Ligase</keyword>
<keyword id="KW-0460">Magnesium</keyword>
<keyword id="KW-0479">Metal-binding</keyword>
<keyword id="KW-0547">Nucleotide-binding</keyword>
<keyword id="KW-0816">Tricarboxylic acid cycle</keyword>
<accession>A3M887</accession>
<reference key="1">
    <citation type="journal article" date="2007" name="Genes Dev.">
        <title>New insights into Acinetobacter baumannii pathogenesis revealed by high-density pyrosequencing and transposon mutagenesis.</title>
        <authorList>
            <person name="Smith M.G."/>
            <person name="Gianoulis T.A."/>
            <person name="Pukatzki S."/>
            <person name="Mekalanos J.J."/>
            <person name="Ornston L.N."/>
            <person name="Gerstein M."/>
            <person name="Snyder M."/>
        </authorList>
    </citation>
    <scope>NUCLEOTIDE SEQUENCE [LARGE SCALE GENOMIC DNA]</scope>
    <source>
        <strain>ATCC 17978 / DSM 105126 / CIP 53.77 / LMG 1025 / NCDC KC755 / 5377</strain>
    </source>
</reference>
<dbReference type="EC" id="6.2.1.5" evidence="1"/>
<dbReference type="EMBL" id="CP000521">
    <property type="protein sequence ID" value="ABO13131.2"/>
    <property type="molecule type" value="Genomic_DNA"/>
</dbReference>
<dbReference type="RefSeq" id="WP_001048573.1">
    <property type="nucleotide sequence ID" value="NZ_CP053098.1"/>
</dbReference>
<dbReference type="SMR" id="A3M887"/>
<dbReference type="GeneID" id="92894978"/>
<dbReference type="KEGG" id="acb:A1S_2718"/>
<dbReference type="HOGENOM" id="CLU_037430_0_2_6"/>
<dbReference type="UniPathway" id="UPA00223">
    <property type="reaction ID" value="UER00999"/>
</dbReference>
<dbReference type="GO" id="GO:0005829">
    <property type="term" value="C:cytosol"/>
    <property type="evidence" value="ECO:0007669"/>
    <property type="project" value="TreeGrafter"/>
</dbReference>
<dbReference type="GO" id="GO:0042709">
    <property type="term" value="C:succinate-CoA ligase complex"/>
    <property type="evidence" value="ECO:0007669"/>
    <property type="project" value="TreeGrafter"/>
</dbReference>
<dbReference type="GO" id="GO:0005524">
    <property type="term" value="F:ATP binding"/>
    <property type="evidence" value="ECO:0007669"/>
    <property type="project" value="UniProtKB-UniRule"/>
</dbReference>
<dbReference type="GO" id="GO:0000287">
    <property type="term" value="F:magnesium ion binding"/>
    <property type="evidence" value="ECO:0007669"/>
    <property type="project" value="UniProtKB-UniRule"/>
</dbReference>
<dbReference type="GO" id="GO:0004775">
    <property type="term" value="F:succinate-CoA ligase (ADP-forming) activity"/>
    <property type="evidence" value="ECO:0007669"/>
    <property type="project" value="UniProtKB-UniRule"/>
</dbReference>
<dbReference type="GO" id="GO:0004776">
    <property type="term" value="F:succinate-CoA ligase (GDP-forming) activity"/>
    <property type="evidence" value="ECO:0007669"/>
    <property type="project" value="RHEA"/>
</dbReference>
<dbReference type="GO" id="GO:0006104">
    <property type="term" value="P:succinyl-CoA metabolic process"/>
    <property type="evidence" value="ECO:0007669"/>
    <property type="project" value="TreeGrafter"/>
</dbReference>
<dbReference type="GO" id="GO:0006099">
    <property type="term" value="P:tricarboxylic acid cycle"/>
    <property type="evidence" value="ECO:0007669"/>
    <property type="project" value="UniProtKB-UniRule"/>
</dbReference>
<dbReference type="FunFam" id="3.30.1490.20:FF:000002">
    <property type="entry name" value="Succinate--CoA ligase [ADP-forming] subunit beta"/>
    <property type="match status" value="1"/>
</dbReference>
<dbReference type="FunFam" id="3.30.470.20:FF:000002">
    <property type="entry name" value="Succinate--CoA ligase [ADP-forming] subunit beta"/>
    <property type="match status" value="1"/>
</dbReference>
<dbReference type="FunFam" id="3.40.50.261:FF:000001">
    <property type="entry name" value="Succinate--CoA ligase [ADP-forming] subunit beta"/>
    <property type="match status" value="1"/>
</dbReference>
<dbReference type="Gene3D" id="3.30.1490.20">
    <property type="entry name" value="ATP-grasp fold, A domain"/>
    <property type="match status" value="1"/>
</dbReference>
<dbReference type="Gene3D" id="3.30.470.20">
    <property type="entry name" value="ATP-grasp fold, B domain"/>
    <property type="match status" value="1"/>
</dbReference>
<dbReference type="Gene3D" id="3.40.50.261">
    <property type="entry name" value="Succinyl-CoA synthetase domains"/>
    <property type="match status" value="1"/>
</dbReference>
<dbReference type="HAMAP" id="MF_00558">
    <property type="entry name" value="Succ_CoA_beta"/>
    <property type="match status" value="1"/>
</dbReference>
<dbReference type="InterPro" id="IPR011761">
    <property type="entry name" value="ATP-grasp"/>
</dbReference>
<dbReference type="InterPro" id="IPR013650">
    <property type="entry name" value="ATP-grasp_succ-CoA_synth-type"/>
</dbReference>
<dbReference type="InterPro" id="IPR013815">
    <property type="entry name" value="ATP_grasp_subdomain_1"/>
</dbReference>
<dbReference type="InterPro" id="IPR017866">
    <property type="entry name" value="Succ-CoA_synthase_bsu_CS"/>
</dbReference>
<dbReference type="InterPro" id="IPR005811">
    <property type="entry name" value="SUCC_ACL_C"/>
</dbReference>
<dbReference type="InterPro" id="IPR005809">
    <property type="entry name" value="Succ_CoA_ligase-like_bsu"/>
</dbReference>
<dbReference type="InterPro" id="IPR016102">
    <property type="entry name" value="Succinyl-CoA_synth-like"/>
</dbReference>
<dbReference type="NCBIfam" id="NF001913">
    <property type="entry name" value="PRK00696.1"/>
    <property type="match status" value="1"/>
</dbReference>
<dbReference type="NCBIfam" id="TIGR01016">
    <property type="entry name" value="sucCoAbeta"/>
    <property type="match status" value="1"/>
</dbReference>
<dbReference type="PANTHER" id="PTHR11815:SF10">
    <property type="entry name" value="SUCCINATE--COA LIGASE [GDP-FORMING] SUBUNIT BETA, MITOCHONDRIAL"/>
    <property type="match status" value="1"/>
</dbReference>
<dbReference type="PANTHER" id="PTHR11815">
    <property type="entry name" value="SUCCINYL-COA SYNTHETASE BETA CHAIN"/>
    <property type="match status" value="1"/>
</dbReference>
<dbReference type="Pfam" id="PF08442">
    <property type="entry name" value="ATP-grasp_2"/>
    <property type="match status" value="1"/>
</dbReference>
<dbReference type="Pfam" id="PF00549">
    <property type="entry name" value="Ligase_CoA"/>
    <property type="match status" value="1"/>
</dbReference>
<dbReference type="PIRSF" id="PIRSF001554">
    <property type="entry name" value="SucCS_beta"/>
    <property type="match status" value="1"/>
</dbReference>
<dbReference type="SUPFAM" id="SSF56059">
    <property type="entry name" value="Glutathione synthetase ATP-binding domain-like"/>
    <property type="match status" value="1"/>
</dbReference>
<dbReference type="SUPFAM" id="SSF52210">
    <property type="entry name" value="Succinyl-CoA synthetase domains"/>
    <property type="match status" value="1"/>
</dbReference>
<dbReference type="PROSITE" id="PS50975">
    <property type="entry name" value="ATP_GRASP"/>
    <property type="match status" value="1"/>
</dbReference>
<dbReference type="PROSITE" id="PS01217">
    <property type="entry name" value="SUCCINYL_COA_LIG_3"/>
    <property type="match status" value="1"/>
</dbReference>